<organism>
    <name type="scientific">Mus musculus</name>
    <name type="common">Mouse</name>
    <dbReference type="NCBI Taxonomy" id="10090"/>
    <lineage>
        <taxon>Eukaryota</taxon>
        <taxon>Metazoa</taxon>
        <taxon>Chordata</taxon>
        <taxon>Craniata</taxon>
        <taxon>Vertebrata</taxon>
        <taxon>Euteleostomi</taxon>
        <taxon>Mammalia</taxon>
        <taxon>Eutheria</taxon>
        <taxon>Euarchontoglires</taxon>
        <taxon>Glires</taxon>
        <taxon>Rodentia</taxon>
        <taxon>Myomorpha</taxon>
        <taxon>Muroidea</taxon>
        <taxon>Muridae</taxon>
        <taxon>Murinae</taxon>
        <taxon>Mus</taxon>
        <taxon>Mus</taxon>
    </lineage>
</organism>
<accession>Q8BH00</accession>
<accession>Q91WS6</accession>
<proteinExistence type="evidence at protein level"/>
<keyword id="KW-0963">Cytoplasm</keyword>
<keyword id="KW-0520">NAD</keyword>
<keyword id="KW-0560">Oxidoreductase</keyword>
<keyword id="KW-0597">Phosphoprotein</keyword>
<keyword id="KW-1185">Reference proteome</keyword>
<dbReference type="EC" id="1.2.1.32" evidence="2"/>
<dbReference type="EMBL" id="AF510322">
    <property type="protein sequence ID" value="AAO64246.1"/>
    <property type="molecule type" value="mRNA"/>
</dbReference>
<dbReference type="EMBL" id="AK050298">
    <property type="protein sequence ID" value="BAC34173.1"/>
    <property type="molecule type" value="mRNA"/>
</dbReference>
<dbReference type="EMBL" id="AK143752">
    <property type="protein sequence ID" value="BAE25524.1"/>
    <property type="molecule type" value="mRNA"/>
</dbReference>
<dbReference type="EMBL" id="BC013511">
    <property type="protein sequence ID" value="AAH13511.1"/>
    <property type="molecule type" value="mRNA"/>
</dbReference>
<dbReference type="EMBL" id="BC038493">
    <property type="protein sequence ID" value="AAH38493.1"/>
    <property type="molecule type" value="mRNA"/>
</dbReference>
<dbReference type="CCDS" id="CCDS23723.1"/>
<dbReference type="RefSeq" id="NP_848828.1">
    <property type="nucleotide sequence ID" value="NM_178713.4"/>
</dbReference>
<dbReference type="SMR" id="Q8BH00"/>
<dbReference type="FunCoup" id="Q8BH00">
    <property type="interactions" value="67"/>
</dbReference>
<dbReference type="STRING" id="10090.ENSMUSP00000038878"/>
<dbReference type="GlyGen" id="Q8BH00">
    <property type="glycosylation" value="1 site, 1 O-linked glycan (1 site)"/>
</dbReference>
<dbReference type="iPTMnet" id="Q8BH00"/>
<dbReference type="PhosphoSitePlus" id="Q8BH00"/>
<dbReference type="SwissPalm" id="Q8BH00"/>
<dbReference type="jPOST" id="Q8BH00"/>
<dbReference type="PaxDb" id="10090-ENSMUSP00000038878"/>
<dbReference type="PeptideAtlas" id="Q8BH00"/>
<dbReference type="ProteomicsDB" id="296169"/>
<dbReference type="Antibodypedia" id="19736">
    <property type="antibodies" value="123 antibodies from 20 providers"/>
</dbReference>
<dbReference type="DNASU" id="237320"/>
<dbReference type="Ensembl" id="ENSMUST00000042699.14">
    <property type="protein sequence ID" value="ENSMUSP00000038878.8"/>
    <property type="gene ID" value="ENSMUSG00000037542.14"/>
</dbReference>
<dbReference type="GeneID" id="237320"/>
<dbReference type="KEGG" id="mmu:237320"/>
<dbReference type="UCSC" id="uc007eoq.1">
    <property type="organism name" value="mouse"/>
</dbReference>
<dbReference type="AGR" id="MGI:2653900"/>
<dbReference type="CTD" id="64577"/>
<dbReference type="MGI" id="MGI:2653900">
    <property type="gene designation" value="Aldh8a1"/>
</dbReference>
<dbReference type="VEuPathDB" id="HostDB:ENSMUSG00000037542"/>
<dbReference type="eggNOG" id="KOG2450">
    <property type="taxonomic scope" value="Eukaryota"/>
</dbReference>
<dbReference type="GeneTree" id="ENSGT00940000156799"/>
<dbReference type="HOGENOM" id="CLU_005391_0_2_1"/>
<dbReference type="InParanoid" id="Q8BH00"/>
<dbReference type="OMA" id="PMPIAAW"/>
<dbReference type="OrthoDB" id="310895at2759"/>
<dbReference type="PhylomeDB" id="Q8BH00"/>
<dbReference type="TreeFam" id="TF314129"/>
<dbReference type="BRENDA" id="1.2.1.3">
    <property type="organism ID" value="3474"/>
</dbReference>
<dbReference type="Reactome" id="R-MMU-5365859">
    <property type="pathway name" value="RA biosynthesis pathway"/>
</dbReference>
<dbReference type="UniPathway" id="UPA00334"/>
<dbReference type="BioGRID-ORCS" id="237320">
    <property type="hits" value="2 hits in 79 CRISPR screens"/>
</dbReference>
<dbReference type="ChiTaRS" id="Aldh8a1">
    <property type="organism name" value="mouse"/>
</dbReference>
<dbReference type="PRO" id="PR:Q8BH00"/>
<dbReference type="Proteomes" id="UP000000589">
    <property type="component" value="Chromosome 10"/>
</dbReference>
<dbReference type="RNAct" id="Q8BH00">
    <property type="molecule type" value="protein"/>
</dbReference>
<dbReference type="Bgee" id="ENSMUSG00000037542">
    <property type="expression patterns" value="Expressed in right kidney and 34 other cell types or tissues"/>
</dbReference>
<dbReference type="GO" id="GO:0005737">
    <property type="term" value="C:cytoplasm"/>
    <property type="evidence" value="ECO:0007669"/>
    <property type="project" value="UniProtKB-SubCell"/>
</dbReference>
<dbReference type="GO" id="GO:0047102">
    <property type="term" value="F:aminomuconate-semialdehyde dehydrogenase activity"/>
    <property type="evidence" value="ECO:0007669"/>
    <property type="project" value="UniProtKB-EC"/>
</dbReference>
<dbReference type="GO" id="GO:0001758">
    <property type="term" value="F:retinal dehydrogenase activity"/>
    <property type="evidence" value="ECO:0000314"/>
    <property type="project" value="MGI"/>
</dbReference>
<dbReference type="GO" id="GO:0042904">
    <property type="term" value="P:9-cis-retinoic acid biosynthetic process"/>
    <property type="evidence" value="ECO:0000314"/>
    <property type="project" value="MGI"/>
</dbReference>
<dbReference type="GO" id="GO:0097053">
    <property type="term" value="P:L-kynurenine catabolic process"/>
    <property type="evidence" value="ECO:0007669"/>
    <property type="project" value="UniProtKB-UniPathway"/>
</dbReference>
<dbReference type="GO" id="GO:0042574">
    <property type="term" value="P:retinal metabolic process"/>
    <property type="evidence" value="ECO:0000250"/>
    <property type="project" value="UniProtKB"/>
</dbReference>
<dbReference type="GO" id="GO:0042573">
    <property type="term" value="P:retinoic acid metabolic process"/>
    <property type="evidence" value="ECO:0000250"/>
    <property type="project" value="UniProtKB"/>
</dbReference>
<dbReference type="CDD" id="cd07093">
    <property type="entry name" value="ALDH_F8_HMSADH"/>
    <property type="match status" value="1"/>
</dbReference>
<dbReference type="FunFam" id="3.40.605.10:FF:000001">
    <property type="entry name" value="Aldehyde dehydrogenase 1"/>
    <property type="match status" value="1"/>
</dbReference>
<dbReference type="FunFam" id="3.40.309.10:FF:000021">
    <property type="entry name" value="Aldehyde dehydrogenase family 8 member A1"/>
    <property type="match status" value="1"/>
</dbReference>
<dbReference type="Gene3D" id="3.40.605.10">
    <property type="entry name" value="Aldehyde Dehydrogenase, Chain A, domain 1"/>
    <property type="match status" value="1"/>
</dbReference>
<dbReference type="Gene3D" id="3.40.309.10">
    <property type="entry name" value="Aldehyde Dehydrogenase, Chain A, domain 2"/>
    <property type="match status" value="1"/>
</dbReference>
<dbReference type="InterPro" id="IPR016161">
    <property type="entry name" value="Ald_DH/histidinol_DH"/>
</dbReference>
<dbReference type="InterPro" id="IPR016163">
    <property type="entry name" value="Ald_DH_C"/>
</dbReference>
<dbReference type="InterPro" id="IPR016160">
    <property type="entry name" value="Ald_DH_CS_CYS"/>
</dbReference>
<dbReference type="InterPro" id="IPR029510">
    <property type="entry name" value="Ald_DH_CS_GLU"/>
</dbReference>
<dbReference type="InterPro" id="IPR016162">
    <property type="entry name" value="Ald_DH_N"/>
</dbReference>
<dbReference type="InterPro" id="IPR015590">
    <property type="entry name" value="Aldehyde_DH_dom"/>
</dbReference>
<dbReference type="PANTHER" id="PTHR43720">
    <property type="entry name" value="2-AMINOMUCONIC SEMIALDEHYDE DEHYDROGENASE"/>
    <property type="match status" value="1"/>
</dbReference>
<dbReference type="PANTHER" id="PTHR43720:SF2">
    <property type="entry name" value="2-AMINOMUCONIC SEMIALDEHYDE DEHYDROGENASE"/>
    <property type="match status" value="1"/>
</dbReference>
<dbReference type="Pfam" id="PF00171">
    <property type="entry name" value="Aldedh"/>
    <property type="match status" value="1"/>
</dbReference>
<dbReference type="SUPFAM" id="SSF53720">
    <property type="entry name" value="ALDH-like"/>
    <property type="match status" value="1"/>
</dbReference>
<dbReference type="PROSITE" id="PS00070">
    <property type="entry name" value="ALDEHYDE_DEHYDR_CYS"/>
    <property type="match status" value="1"/>
</dbReference>
<dbReference type="PROSITE" id="PS00687">
    <property type="entry name" value="ALDEHYDE_DEHYDR_GLU"/>
    <property type="match status" value="1"/>
</dbReference>
<gene>
    <name type="primary">Aldh8a1</name>
    <name type="synonym">Raldh4</name>
</gene>
<reference key="1">
    <citation type="journal article" date="2003" name="J. Biol. Chem.">
        <title>Mouse retinal dehydrogenase 4 (RALDH4), molecular cloning, cellular expression, and activity in 9-cis-retinoic acid biosynthesis in intact cells.</title>
        <authorList>
            <person name="Lin M."/>
            <person name="Zhang M."/>
            <person name="Abraham M."/>
            <person name="Smith S.M."/>
            <person name="Napoli J.L."/>
        </authorList>
    </citation>
    <scope>NUCLEOTIDE SEQUENCE [MRNA]</scope>
    <scope>SUBCELLULAR LOCATION</scope>
    <scope>TISSUE SPECIFICITY</scope>
    <source>
        <tissue>Embryo</tissue>
    </source>
</reference>
<reference key="2">
    <citation type="journal article" date="2005" name="Science">
        <title>The transcriptional landscape of the mammalian genome.</title>
        <authorList>
            <person name="Carninci P."/>
            <person name="Kasukawa T."/>
            <person name="Katayama S."/>
            <person name="Gough J."/>
            <person name="Frith M.C."/>
            <person name="Maeda N."/>
            <person name="Oyama R."/>
            <person name="Ravasi T."/>
            <person name="Lenhard B."/>
            <person name="Wells C."/>
            <person name="Kodzius R."/>
            <person name="Shimokawa K."/>
            <person name="Bajic V.B."/>
            <person name="Brenner S.E."/>
            <person name="Batalov S."/>
            <person name="Forrest A.R."/>
            <person name="Zavolan M."/>
            <person name="Davis M.J."/>
            <person name="Wilming L.G."/>
            <person name="Aidinis V."/>
            <person name="Allen J.E."/>
            <person name="Ambesi-Impiombato A."/>
            <person name="Apweiler R."/>
            <person name="Aturaliya R.N."/>
            <person name="Bailey T.L."/>
            <person name="Bansal M."/>
            <person name="Baxter L."/>
            <person name="Beisel K.W."/>
            <person name="Bersano T."/>
            <person name="Bono H."/>
            <person name="Chalk A.M."/>
            <person name="Chiu K.P."/>
            <person name="Choudhary V."/>
            <person name="Christoffels A."/>
            <person name="Clutterbuck D.R."/>
            <person name="Crowe M.L."/>
            <person name="Dalla E."/>
            <person name="Dalrymple B.P."/>
            <person name="de Bono B."/>
            <person name="Della Gatta G."/>
            <person name="di Bernardo D."/>
            <person name="Down T."/>
            <person name="Engstrom P."/>
            <person name="Fagiolini M."/>
            <person name="Faulkner G."/>
            <person name="Fletcher C.F."/>
            <person name="Fukushima T."/>
            <person name="Furuno M."/>
            <person name="Futaki S."/>
            <person name="Gariboldi M."/>
            <person name="Georgii-Hemming P."/>
            <person name="Gingeras T.R."/>
            <person name="Gojobori T."/>
            <person name="Green R.E."/>
            <person name="Gustincich S."/>
            <person name="Harbers M."/>
            <person name="Hayashi Y."/>
            <person name="Hensch T.K."/>
            <person name="Hirokawa N."/>
            <person name="Hill D."/>
            <person name="Huminiecki L."/>
            <person name="Iacono M."/>
            <person name="Ikeo K."/>
            <person name="Iwama A."/>
            <person name="Ishikawa T."/>
            <person name="Jakt M."/>
            <person name="Kanapin A."/>
            <person name="Katoh M."/>
            <person name="Kawasawa Y."/>
            <person name="Kelso J."/>
            <person name="Kitamura H."/>
            <person name="Kitano H."/>
            <person name="Kollias G."/>
            <person name="Krishnan S.P."/>
            <person name="Kruger A."/>
            <person name="Kummerfeld S.K."/>
            <person name="Kurochkin I.V."/>
            <person name="Lareau L.F."/>
            <person name="Lazarevic D."/>
            <person name="Lipovich L."/>
            <person name="Liu J."/>
            <person name="Liuni S."/>
            <person name="McWilliam S."/>
            <person name="Madan Babu M."/>
            <person name="Madera M."/>
            <person name="Marchionni L."/>
            <person name="Matsuda H."/>
            <person name="Matsuzawa S."/>
            <person name="Miki H."/>
            <person name="Mignone F."/>
            <person name="Miyake S."/>
            <person name="Morris K."/>
            <person name="Mottagui-Tabar S."/>
            <person name="Mulder N."/>
            <person name="Nakano N."/>
            <person name="Nakauchi H."/>
            <person name="Ng P."/>
            <person name="Nilsson R."/>
            <person name="Nishiguchi S."/>
            <person name="Nishikawa S."/>
            <person name="Nori F."/>
            <person name="Ohara O."/>
            <person name="Okazaki Y."/>
            <person name="Orlando V."/>
            <person name="Pang K.C."/>
            <person name="Pavan W.J."/>
            <person name="Pavesi G."/>
            <person name="Pesole G."/>
            <person name="Petrovsky N."/>
            <person name="Piazza S."/>
            <person name="Reed J."/>
            <person name="Reid J.F."/>
            <person name="Ring B.Z."/>
            <person name="Ringwald M."/>
            <person name="Rost B."/>
            <person name="Ruan Y."/>
            <person name="Salzberg S.L."/>
            <person name="Sandelin A."/>
            <person name="Schneider C."/>
            <person name="Schoenbach C."/>
            <person name="Sekiguchi K."/>
            <person name="Semple C.A."/>
            <person name="Seno S."/>
            <person name="Sessa L."/>
            <person name="Sheng Y."/>
            <person name="Shibata Y."/>
            <person name="Shimada H."/>
            <person name="Shimada K."/>
            <person name="Silva D."/>
            <person name="Sinclair B."/>
            <person name="Sperling S."/>
            <person name="Stupka E."/>
            <person name="Sugiura K."/>
            <person name="Sultana R."/>
            <person name="Takenaka Y."/>
            <person name="Taki K."/>
            <person name="Tammoja K."/>
            <person name="Tan S.L."/>
            <person name="Tang S."/>
            <person name="Taylor M.S."/>
            <person name="Tegner J."/>
            <person name="Teichmann S.A."/>
            <person name="Ueda H.R."/>
            <person name="van Nimwegen E."/>
            <person name="Verardo R."/>
            <person name="Wei C.L."/>
            <person name="Yagi K."/>
            <person name="Yamanishi H."/>
            <person name="Zabarovsky E."/>
            <person name="Zhu S."/>
            <person name="Zimmer A."/>
            <person name="Hide W."/>
            <person name="Bult C."/>
            <person name="Grimmond S.M."/>
            <person name="Teasdale R.D."/>
            <person name="Liu E.T."/>
            <person name="Brusic V."/>
            <person name="Quackenbush J."/>
            <person name="Wahlestedt C."/>
            <person name="Mattick J.S."/>
            <person name="Hume D.A."/>
            <person name="Kai C."/>
            <person name="Sasaki D."/>
            <person name="Tomaru Y."/>
            <person name="Fukuda S."/>
            <person name="Kanamori-Katayama M."/>
            <person name="Suzuki M."/>
            <person name="Aoki J."/>
            <person name="Arakawa T."/>
            <person name="Iida J."/>
            <person name="Imamura K."/>
            <person name="Itoh M."/>
            <person name="Kato T."/>
            <person name="Kawaji H."/>
            <person name="Kawagashira N."/>
            <person name="Kawashima T."/>
            <person name="Kojima M."/>
            <person name="Kondo S."/>
            <person name="Konno H."/>
            <person name="Nakano K."/>
            <person name="Ninomiya N."/>
            <person name="Nishio T."/>
            <person name="Okada M."/>
            <person name="Plessy C."/>
            <person name="Shibata K."/>
            <person name="Shiraki T."/>
            <person name="Suzuki S."/>
            <person name="Tagami M."/>
            <person name="Waki K."/>
            <person name="Watahiki A."/>
            <person name="Okamura-Oho Y."/>
            <person name="Suzuki H."/>
            <person name="Kawai J."/>
            <person name="Hayashizaki Y."/>
        </authorList>
    </citation>
    <scope>NUCLEOTIDE SEQUENCE [LARGE SCALE MRNA]</scope>
    <source>
        <strain>C57BL/6J</strain>
        <tissue>Liver tumor</tissue>
        <tissue>Spleen</tissue>
    </source>
</reference>
<reference key="3">
    <citation type="journal article" date="2004" name="Genome Res.">
        <title>The status, quality, and expansion of the NIH full-length cDNA project: the Mammalian Gene Collection (MGC).</title>
        <authorList>
            <consortium name="The MGC Project Team"/>
        </authorList>
    </citation>
    <scope>NUCLEOTIDE SEQUENCE [LARGE SCALE MRNA]</scope>
    <scope>VARIANT GLY-145</scope>
    <source>
        <strain>FVB/N</strain>
        <tissue>Kidney</tissue>
    </source>
</reference>
<reference key="4">
    <citation type="journal article" date="2010" name="Cell">
        <title>A tissue-specific atlas of mouse protein phosphorylation and expression.</title>
        <authorList>
            <person name="Huttlin E.L."/>
            <person name="Jedrychowski M.P."/>
            <person name="Elias J.E."/>
            <person name="Goswami T."/>
            <person name="Rad R."/>
            <person name="Beausoleil S.A."/>
            <person name="Villen J."/>
            <person name="Haas W."/>
            <person name="Sowa M.E."/>
            <person name="Gygi S.P."/>
        </authorList>
    </citation>
    <scope>IDENTIFICATION BY MASS SPECTROMETRY [LARGE SCALE ANALYSIS]</scope>
    <source>
        <tissue>Kidney</tissue>
        <tissue>Liver</tissue>
    </source>
</reference>
<sequence length="487" mass="53664">MAGKRELLMLENFIGGKFLPCNSYIDSYDPSTGEVYCKVPNSGKEEIEAAVEAAREAFPAWSSRSPQERSLVLNRLADVLEQSLEELAQAESKDQGKTLTLARTMDIPRSVLNFRFFASSNLHHVSECTQMSHLGCMHYTVRTPVGIAGLISPWNLPLYLLTWKIAPAIAAGNTVIAKPSEMTSVTAWMFCKLLDKAGVPPGVINIVFGTGPRVGEALVSHPEVPLISFTGSQPTAERITQLSAPHCKKLSLELGGKNPAIIFEDANLEECIPATVRSSFANQGEICLCTSRIFVQRSIYSEFLKRFVEATRKWKVGVPSDPSANMGALISKAHLEKVRSYVLKAQTEGARILCGEGVDQLSLPLRNQAGYFMLPTVITDIKDESRCMTEEIFGPVTCVVPFDSEEEVITRANSVRYGLAATVWSKDVGRIHRVAKKLQSGLVWTNCWLIRELNLPFGGMKSSGIGREGAKDSYDFFTEIKTITIKY</sequence>
<feature type="chain" id="PRO_0000312955" description="2-aminomuconic semialdehyde dehydrogenase">
    <location>
        <begin position="1"/>
        <end position="487"/>
    </location>
</feature>
<feature type="active site" description="Proton acceptor" evidence="3 4">
    <location>
        <position position="253"/>
    </location>
</feature>
<feature type="active site" description="Nucleophile" evidence="3 4">
    <location>
        <position position="287"/>
    </location>
</feature>
<feature type="binding site" evidence="1">
    <location>
        <begin position="231"/>
        <end position="236"/>
    </location>
    <ligand>
        <name>NAD(+)</name>
        <dbReference type="ChEBI" id="CHEBI:57540"/>
    </ligand>
</feature>
<feature type="site" description="Transition state stabilizer" evidence="1">
    <location>
        <position position="155"/>
    </location>
</feature>
<feature type="modified residue" description="Phosphoserine" evidence="2">
    <location>
        <position position="362"/>
    </location>
</feature>
<feature type="sequence variant" description="In strain: FVB/N." evidence="6">
    <original>V</original>
    <variation>G</variation>
    <location>
        <position position="145"/>
    </location>
</feature>
<name>AL8A1_MOUSE</name>
<evidence type="ECO:0000250" key="1"/>
<evidence type="ECO:0000250" key="2">
    <source>
        <dbReference type="UniProtKB" id="Q9H2A2"/>
    </source>
</evidence>
<evidence type="ECO:0000255" key="3">
    <source>
        <dbReference type="PROSITE-ProRule" id="PRU10007"/>
    </source>
</evidence>
<evidence type="ECO:0000255" key="4">
    <source>
        <dbReference type="PROSITE-ProRule" id="PRU10008"/>
    </source>
</evidence>
<evidence type="ECO:0000269" key="5">
    <source>
    </source>
</evidence>
<evidence type="ECO:0000269" key="6">
    <source>
    </source>
</evidence>
<evidence type="ECO:0000305" key="7"/>
<comment type="function">
    <text evidence="2">Catalyzes the NAD-dependent oxidation of 2-aminomuconic semialdehyde of the kynurenine metabolic pathway in L-tryptophan degradation.</text>
</comment>
<comment type="catalytic activity">
    <reaction evidence="2">
        <text>2-aminomuconate 6-semialdehyde + NAD(+) + H2O = (2Z,4E)-2-aminomuconate + NADH + 2 H(+)</text>
        <dbReference type="Rhea" id="RHEA:14469"/>
        <dbReference type="ChEBI" id="CHEBI:15377"/>
        <dbReference type="ChEBI" id="CHEBI:15378"/>
        <dbReference type="ChEBI" id="CHEBI:57540"/>
        <dbReference type="ChEBI" id="CHEBI:57945"/>
        <dbReference type="ChEBI" id="CHEBI:77634"/>
        <dbReference type="ChEBI" id="CHEBI:77859"/>
        <dbReference type="EC" id="1.2.1.32"/>
    </reaction>
</comment>
<comment type="biophysicochemical properties">
    <kinetics>
        <KM evidence="5">2.3 uM for 9-cis-retinal</KM>
        <Vmax evidence="5">3.4 nmol/min/mg enzyme</Vmax>
        <text>Activity was measured with total soluble protein.</text>
    </kinetics>
</comment>
<comment type="pathway">
    <text evidence="2">Amino-acid degradation; L-kynurenine degradation.</text>
</comment>
<comment type="subcellular location">
    <subcellularLocation>
        <location evidence="5">Cytoplasm</location>
    </subcellularLocation>
</comment>
<comment type="tissue specificity">
    <text evidence="5">Detected in hepatocytes and in proximal and distal convoluted tubules in kidney cortex (at protein level). Highly expressed in adult liver and in kidney cortex. First detected in embryonic liver after 15 days of development.</text>
</comment>
<comment type="similarity">
    <text evidence="7">Belongs to the aldehyde dehydrogenase family.</text>
</comment>
<protein>
    <recommendedName>
        <fullName>2-aminomuconic semialdehyde dehydrogenase</fullName>
        <ecNumber evidence="2">1.2.1.32</ecNumber>
    </recommendedName>
    <alternativeName>
        <fullName>Aldehyde dehydrogenase family 8 member A1</fullName>
    </alternativeName>
    <alternativeName>
        <fullName>Retinal dehydrogenase 4</fullName>
    </alternativeName>
</protein>